<name>AMY2A_ORYSJ</name>
<organism>
    <name type="scientific">Oryza sativa subsp. japonica</name>
    <name type="common">Rice</name>
    <dbReference type="NCBI Taxonomy" id="39947"/>
    <lineage>
        <taxon>Eukaryota</taxon>
        <taxon>Viridiplantae</taxon>
        <taxon>Streptophyta</taxon>
        <taxon>Embryophyta</taxon>
        <taxon>Tracheophyta</taxon>
        <taxon>Spermatophyta</taxon>
        <taxon>Magnoliopsida</taxon>
        <taxon>Liliopsida</taxon>
        <taxon>Poales</taxon>
        <taxon>Poaceae</taxon>
        <taxon>BOP clade</taxon>
        <taxon>Oryzoideae</taxon>
        <taxon>Oryzeae</taxon>
        <taxon>Oryzinae</taxon>
        <taxon>Oryza</taxon>
        <taxon>Oryza sativa</taxon>
    </lineage>
</organism>
<dbReference type="EC" id="3.2.1.1" evidence="2"/>
<dbReference type="EMBL" id="M74177">
    <property type="protein sequence ID" value="AAA33894.1"/>
    <property type="molecule type" value="Genomic_DNA"/>
</dbReference>
<dbReference type="EMBL" id="AP004678">
    <property type="protein sequence ID" value="BAD54103.1"/>
    <property type="molecule type" value="Genomic_DNA"/>
</dbReference>
<dbReference type="EMBL" id="AP008212">
    <property type="protein sequence ID" value="BAF20482.1"/>
    <property type="molecule type" value="Genomic_DNA"/>
</dbReference>
<dbReference type="EMBL" id="AP014962">
    <property type="protein sequence ID" value="BAS99475.1"/>
    <property type="molecule type" value="Genomic_DNA"/>
</dbReference>
<dbReference type="EMBL" id="CM000143">
    <property type="protein sequence ID" value="EEE66350.1"/>
    <property type="molecule type" value="Genomic_DNA"/>
</dbReference>
<dbReference type="EMBL" id="AK059671">
    <property type="protein sequence ID" value="BAG87072.1"/>
    <property type="molecule type" value="mRNA"/>
</dbReference>
<dbReference type="EMBL" id="AK101018">
    <property type="protein sequence ID" value="BAG94883.1"/>
    <property type="molecule type" value="mRNA"/>
</dbReference>
<dbReference type="PIR" id="JQ1527">
    <property type="entry name" value="JQ1527"/>
</dbReference>
<dbReference type="RefSeq" id="XP_015641245.1">
    <property type="nucleotide sequence ID" value="XM_015785759.1"/>
</dbReference>
<dbReference type="SMR" id="Q0D9J1"/>
<dbReference type="FunCoup" id="Q0D9J1">
    <property type="interactions" value="258"/>
</dbReference>
<dbReference type="STRING" id="39947.Q0D9J1"/>
<dbReference type="CAZy" id="GH13">
    <property type="family name" value="Glycoside Hydrolase Family 13"/>
</dbReference>
<dbReference type="PaxDb" id="39947-Q0D9J1"/>
<dbReference type="EnsemblPlants" id="Os06t0713800-01">
    <property type="protein sequence ID" value="Os06t0713800-01"/>
    <property type="gene ID" value="Os06g0713800"/>
</dbReference>
<dbReference type="Gramene" id="Os06t0713800-01">
    <property type="protein sequence ID" value="Os06t0713800-01"/>
    <property type="gene ID" value="Os06g0713800"/>
</dbReference>
<dbReference type="KEGG" id="dosa:Os06g0713800"/>
<dbReference type="eggNOG" id="KOG0471">
    <property type="taxonomic scope" value="Eukaryota"/>
</dbReference>
<dbReference type="HOGENOM" id="CLU_030069_1_0_1"/>
<dbReference type="InParanoid" id="Q0D9J1"/>
<dbReference type="OMA" id="AVWEKSA"/>
<dbReference type="OrthoDB" id="550577at2759"/>
<dbReference type="Proteomes" id="UP000000763">
    <property type="component" value="Chromosome 6"/>
</dbReference>
<dbReference type="Proteomes" id="UP000007752">
    <property type="component" value="Chromosome 6"/>
</dbReference>
<dbReference type="Proteomes" id="UP000059680">
    <property type="component" value="Chromosome 6"/>
</dbReference>
<dbReference type="GO" id="GO:0004556">
    <property type="term" value="F:alpha-amylase activity"/>
    <property type="evidence" value="ECO:0000318"/>
    <property type="project" value="GO_Central"/>
</dbReference>
<dbReference type="GO" id="GO:0005509">
    <property type="term" value="F:calcium ion binding"/>
    <property type="evidence" value="ECO:0007669"/>
    <property type="project" value="InterPro"/>
</dbReference>
<dbReference type="GO" id="GO:0005983">
    <property type="term" value="P:starch catabolic process"/>
    <property type="evidence" value="ECO:0007669"/>
    <property type="project" value="UniProtKB-ARBA"/>
</dbReference>
<dbReference type="GO" id="GO:0005987">
    <property type="term" value="P:sucrose catabolic process"/>
    <property type="evidence" value="ECO:0000318"/>
    <property type="project" value="GO_Central"/>
</dbReference>
<dbReference type="CDD" id="cd11314">
    <property type="entry name" value="AmyAc_arch_bac_plant_AmyA"/>
    <property type="match status" value="1"/>
</dbReference>
<dbReference type="Gene3D" id="3.20.20.80">
    <property type="entry name" value="Glycosidases"/>
    <property type="match status" value="1"/>
</dbReference>
<dbReference type="Gene3D" id="2.60.40.1180">
    <property type="entry name" value="Golgi alpha-mannosidase II"/>
    <property type="match status" value="1"/>
</dbReference>
<dbReference type="InterPro" id="IPR012850">
    <property type="entry name" value="A-amylase_bs_C"/>
</dbReference>
<dbReference type="InterPro" id="IPR013775">
    <property type="entry name" value="A-amylase_pln"/>
</dbReference>
<dbReference type="InterPro" id="IPR006046">
    <property type="entry name" value="Alpha_amylase"/>
</dbReference>
<dbReference type="InterPro" id="IPR006047">
    <property type="entry name" value="Glyco_hydro_13_cat_dom"/>
</dbReference>
<dbReference type="InterPro" id="IPR013780">
    <property type="entry name" value="Glyco_hydro_b"/>
</dbReference>
<dbReference type="InterPro" id="IPR017853">
    <property type="entry name" value="Glycoside_hydrolase_SF"/>
</dbReference>
<dbReference type="PANTHER" id="PTHR43447">
    <property type="entry name" value="ALPHA-AMYLASE"/>
    <property type="match status" value="1"/>
</dbReference>
<dbReference type="Pfam" id="PF07821">
    <property type="entry name" value="Alpha-amyl_C2"/>
    <property type="match status" value="1"/>
</dbReference>
<dbReference type="Pfam" id="PF00128">
    <property type="entry name" value="Alpha-amylase"/>
    <property type="match status" value="1"/>
</dbReference>
<dbReference type="PIRSF" id="PIRSF001028">
    <property type="entry name" value="Alph-amls_plant"/>
    <property type="match status" value="1"/>
</dbReference>
<dbReference type="PRINTS" id="PR00110">
    <property type="entry name" value="ALPHAAMYLASE"/>
</dbReference>
<dbReference type="SMART" id="SM00642">
    <property type="entry name" value="Aamy"/>
    <property type="match status" value="1"/>
</dbReference>
<dbReference type="SMART" id="SM00810">
    <property type="entry name" value="Alpha-amyl_C2"/>
    <property type="match status" value="1"/>
</dbReference>
<dbReference type="SUPFAM" id="SSF51445">
    <property type="entry name" value="(Trans)glycosidases"/>
    <property type="match status" value="1"/>
</dbReference>
<dbReference type="SUPFAM" id="SSF51011">
    <property type="entry name" value="Glycosyl hydrolase domain"/>
    <property type="match status" value="1"/>
</dbReference>
<keyword id="KW-0106">Calcium</keyword>
<keyword id="KW-0119">Carbohydrate metabolism</keyword>
<keyword id="KW-0326">Glycosidase</keyword>
<keyword id="KW-0378">Hydrolase</keyword>
<keyword id="KW-0479">Metal-binding</keyword>
<keyword id="KW-1185">Reference proteome</keyword>
<keyword id="KW-0732">Signal</keyword>
<evidence type="ECO:0000250" key="1"/>
<evidence type="ECO:0000250" key="2">
    <source>
        <dbReference type="UniProtKB" id="P00693"/>
    </source>
</evidence>
<evidence type="ECO:0000250" key="3">
    <source>
        <dbReference type="UniProtKB" id="P04063"/>
    </source>
</evidence>
<evidence type="ECO:0000255" key="4"/>
<evidence type="ECO:0000305" key="5"/>
<evidence type="ECO:0000312" key="6">
    <source>
        <dbReference type="EMBL" id="EEE66350.1"/>
    </source>
</evidence>
<comment type="function">
    <text>Important for breakdown of endosperm starch during germination.</text>
</comment>
<comment type="catalytic activity">
    <reaction evidence="2">
        <text>Endohydrolysis of (1-&gt;4)-alpha-D-glucosidic linkages in polysaccharides containing three or more (1-&gt;4)-alpha-linked D-glucose units.</text>
        <dbReference type="EC" id="3.2.1.1"/>
    </reaction>
</comment>
<comment type="cofactor">
    <cofactor evidence="2">
        <name>Ca(2+)</name>
        <dbReference type="ChEBI" id="CHEBI:29108"/>
    </cofactor>
    <text evidence="2">Binds 3 Ca(2+) ions per subunit.</text>
</comment>
<comment type="subunit">
    <text evidence="1">Monomer.</text>
</comment>
<comment type="developmental stage">
    <text>Expressed at a high level during germination in the aleurones cells under the control of the plant hormone gibberellic acid and in the developing grains at a low level.</text>
</comment>
<comment type="miscellaneous">
    <text evidence="1">Binds starch not only at the active site, but also via accessory binding sites on the protein surface that are important for efficient binding to starch granules and thereby increase enzyme activity.</text>
</comment>
<comment type="similarity">
    <text evidence="5">Belongs to the glycosyl hydrolase 13 family.</text>
</comment>
<protein>
    <recommendedName>
        <fullName>Alpha-amylase isozyme 2A</fullName>
        <ecNumber evidence="2">3.2.1.1</ecNumber>
    </recommendedName>
    <alternativeName>
        <fullName>1,4-alpha-D-glucan glucanohydrolase</fullName>
    </alternativeName>
    <alternativeName>
        <fullName>Alpha-amylase isozyme C2</fullName>
    </alternativeName>
</protein>
<reference key="1">
    <citation type="journal article" date="1992" name="Gene">
        <title>RAmy2A; a novel alpha-amylase-encoding gene in rice.</title>
        <authorList>
            <person name="Huang N."/>
            <person name="Reinl S.J."/>
            <person name="Rodriguez R.L."/>
        </authorList>
    </citation>
    <scope>NUCLEOTIDE SEQUENCE [GENOMIC DNA]</scope>
    <source>
        <strain>cv. M202</strain>
    </source>
</reference>
<reference key="2">
    <citation type="journal article" date="2005" name="Nature">
        <title>The map-based sequence of the rice genome.</title>
        <authorList>
            <consortium name="International rice genome sequencing project (IRGSP)"/>
        </authorList>
    </citation>
    <scope>NUCLEOTIDE SEQUENCE [LARGE SCALE GENOMIC DNA]</scope>
    <source>
        <strain>cv. Nipponbare</strain>
    </source>
</reference>
<reference key="3">
    <citation type="journal article" date="2008" name="Nucleic Acids Res.">
        <title>The rice annotation project database (RAP-DB): 2008 update.</title>
        <authorList>
            <consortium name="The rice annotation project (RAP)"/>
        </authorList>
    </citation>
    <scope>GENOME REANNOTATION</scope>
    <source>
        <strain>cv. Nipponbare</strain>
    </source>
</reference>
<reference key="4">
    <citation type="journal article" date="2013" name="Rice">
        <title>Improvement of the Oryza sativa Nipponbare reference genome using next generation sequence and optical map data.</title>
        <authorList>
            <person name="Kawahara Y."/>
            <person name="de la Bastide M."/>
            <person name="Hamilton J.P."/>
            <person name="Kanamori H."/>
            <person name="McCombie W.R."/>
            <person name="Ouyang S."/>
            <person name="Schwartz D.C."/>
            <person name="Tanaka T."/>
            <person name="Wu J."/>
            <person name="Zhou S."/>
            <person name="Childs K.L."/>
            <person name="Davidson R.M."/>
            <person name="Lin H."/>
            <person name="Quesada-Ocampo L."/>
            <person name="Vaillancourt B."/>
            <person name="Sakai H."/>
            <person name="Lee S.S."/>
            <person name="Kim J."/>
            <person name="Numa H."/>
            <person name="Itoh T."/>
            <person name="Buell C.R."/>
            <person name="Matsumoto T."/>
        </authorList>
    </citation>
    <scope>GENOME REANNOTATION</scope>
    <source>
        <strain>cv. Nipponbare</strain>
    </source>
</reference>
<reference key="5">
    <citation type="journal article" date="2005" name="PLoS Biol.">
        <title>The genomes of Oryza sativa: a history of duplications.</title>
        <authorList>
            <person name="Yu J."/>
            <person name="Wang J."/>
            <person name="Lin W."/>
            <person name="Li S."/>
            <person name="Li H."/>
            <person name="Zhou J."/>
            <person name="Ni P."/>
            <person name="Dong W."/>
            <person name="Hu S."/>
            <person name="Zeng C."/>
            <person name="Zhang J."/>
            <person name="Zhang Y."/>
            <person name="Li R."/>
            <person name="Xu Z."/>
            <person name="Li S."/>
            <person name="Li X."/>
            <person name="Zheng H."/>
            <person name="Cong L."/>
            <person name="Lin L."/>
            <person name="Yin J."/>
            <person name="Geng J."/>
            <person name="Li G."/>
            <person name="Shi J."/>
            <person name="Liu J."/>
            <person name="Lv H."/>
            <person name="Li J."/>
            <person name="Wang J."/>
            <person name="Deng Y."/>
            <person name="Ran L."/>
            <person name="Shi X."/>
            <person name="Wang X."/>
            <person name="Wu Q."/>
            <person name="Li C."/>
            <person name="Ren X."/>
            <person name="Wang J."/>
            <person name="Wang X."/>
            <person name="Li D."/>
            <person name="Liu D."/>
            <person name="Zhang X."/>
            <person name="Ji Z."/>
            <person name="Zhao W."/>
            <person name="Sun Y."/>
            <person name="Zhang Z."/>
            <person name="Bao J."/>
            <person name="Han Y."/>
            <person name="Dong L."/>
            <person name="Ji J."/>
            <person name="Chen P."/>
            <person name="Wu S."/>
            <person name="Liu J."/>
            <person name="Xiao Y."/>
            <person name="Bu D."/>
            <person name="Tan J."/>
            <person name="Yang L."/>
            <person name="Ye C."/>
            <person name="Zhang J."/>
            <person name="Xu J."/>
            <person name="Zhou Y."/>
            <person name="Yu Y."/>
            <person name="Zhang B."/>
            <person name="Zhuang S."/>
            <person name="Wei H."/>
            <person name="Liu B."/>
            <person name="Lei M."/>
            <person name="Yu H."/>
            <person name="Li Y."/>
            <person name="Xu H."/>
            <person name="Wei S."/>
            <person name="He X."/>
            <person name="Fang L."/>
            <person name="Zhang Z."/>
            <person name="Zhang Y."/>
            <person name="Huang X."/>
            <person name="Su Z."/>
            <person name="Tong W."/>
            <person name="Li J."/>
            <person name="Tong Z."/>
            <person name="Li S."/>
            <person name="Ye J."/>
            <person name="Wang L."/>
            <person name="Fang L."/>
            <person name="Lei T."/>
            <person name="Chen C.-S."/>
            <person name="Chen H.-C."/>
            <person name="Xu Z."/>
            <person name="Li H."/>
            <person name="Huang H."/>
            <person name="Zhang F."/>
            <person name="Xu H."/>
            <person name="Li N."/>
            <person name="Zhao C."/>
            <person name="Li S."/>
            <person name="Dong L."/>
            <person name="Huang Y."/>
            <person name="Li L."/>
            <person name="Xi Y."/>
            <person name="Qi Q."/>
            <person name="Li W."/>
            <person name="Zhang B."/>
            <person name="Hu W."/>
            <person name="Zhang Y."/>
            <person name="Tian X."/>
            <person name="Jiao Y."/>
            <person name="Liang X."/>
            <person name="Jin J."/>
            <person name="Gao L."/>
            <person name="Zheng W."/>
            <person name="Hao B."/>
            <person name="Liu S.-M."/>
            <person name="Wang W."/>
            <person name="Yuan L."/>
            <person name="Cao M."/>
            <person name="McDermott J."/>
            <person name="Samudrala R."/>
            <person name="Wang J."/>
            <person name="Wong G.K.-S."/>
            <person name="Yang H."/>
        </authorList>
    </citation>
    <scope>NUCLEOTIDE SEQUENCE [LARGE SCALE GENOMIC DNA]</scope>
    <source>
        <strain>cv. Nipponbare</strain>
    </source>
</reference>
<reference key="6">
    <citation type="journal article" date="2003" name="Science">
        <title>Collection, mapping, and annotation of over 28,000 cDNA clones from japonica rice.</title>
        <authorList>
            <consortium name="The rice full-length cDNA consortium"/>
        </authorList>
    </citation>
    <scope>NUCLEOTIDE SEQUENCE [LARGE SCALE MRNA]</scope>
    <source>
        <strain>cv. Nipponbare</strain>
    </source>
</reference>
<accession>Q0D9J1</accession>
<accession>B7E3X5</accession>
<accession>P27935</accession>
<accession>P27941</accession>
<accession>Q5Z7T8</accession>
<proteinExistence type="evidence at transcript level"/>
<gene>
    <name type="primary">AMY2A</name>
    <name type="synonym">AMY1.5</name>
    <name type="synonym">AMYC2</name>
    <name type="ordered locus">Os06g0713800</name>
    <name type="ordered locus">LOC_Os06g49970</name>
    <name type="ORF">OJ1136_F03.12</name>
    <name evidence="6" type="ORF">OsJ_22644</name>
</gene>
<feature type="signal peptide" evidence="4">
    <location>
        <begin position="1"/>
        <end position="21"/>
    </location>
</feature>
<feature type="chain" id="PRO_0000001409" description="Alpha-amylase isozyme 2A">
    <location>
        <begin position="22"/>
        <end position="445"/>
    </location>
</feature>
<feature type="active site" description="Nucleophile" evidence="2">
    <location>
        <position position="202"/>
    </location>
</feature>
<feature type="active site" description="Proton donor" evidence="2">
    <location>
        <position position="228"/>
    </location>
</feature>
<feature type="binding site" evidence="2">
    <location>
        <begin position="66"/>
        <end position="68"/>
    </location>
    <ligand>
        <name>substrate</name>
    </ligand>
</feature>
<feature type="binding site" evidence="2">
    <location>
        <begin position="73"/>
        <end position="74"/>
    </location>
    <ligand>
        <name>substrate</name>
    </ligand>
</feature>
<feature type="binding site" evidence="2">
    <location>
        <position position="113"/>
    </location>
    <ligand>
        <name>Ca(2+)</name>
        <dbReference type="ChEBI" id="CHEBI:29108"/>
        <label>1</label>
    </ligand>
</feature>
<feature type="binding site" evidence="2">
    <location>
        <position position="130"/>
    </location>
    <ligand>
        <name>Ca(2+)</name>
        <dbReference type="ChEBI" id="CHEBI:29108"/>
        <label>2</label>
    </ligand>
</feature>
<feature type="binding site" evidence="2">
    <location>
        <position position="133"/>
    </location>
    <ligand>
        <name>Ca(2+)</name>
        <dbReference type="ChEBI" id="CHEBI:29108"/>
        <label>2</label>
    </ligand>
</feature>
<feature type="binding site" evidence="2">
    <location>
        <position position="135"/>
    </location>
    <ligand>
        <name>Ca(2+)</name>
        <dbReference type="ChEBI" id="CHEBI:29108"/>
        <label>2</label>
    </ligand>
</feature>
<feature type="binding site" evidence="2">
    <location>
        <position position="139"/>
    </location>
    <ligand>
        <name>Ca(2+)</name>
        <dbReference type="ChEBI" id="CHEBI:29108"/>
        <label>2</label>
    </ligand>
</feature>
<feature type="binding site" evidence="2">
    <location>
        <position position="149"/>
    </location>
    <ligand>
        <name>Ca(2+)</name>
        <dbReference type="ChEBI" id="CHEBI:29108"/>
        <label>3</label>
    </ligand>
</feature>
<feature type="binding site" evidence="2">
    <location>
        <position position="160"/>
    </location>
    <ligand>
        <name>Ca(2+)</name>
        <dbReference type="ChEBI" id="CHEBI:29108"/>
        <label>1</label>
    </ligand>
</feature>
<feature type="binding site" evidence="2">
    <location>
        <position position="163"/>
    </location>
    <ligand>
        <name>Ca(2+)</name>
        <dbReference type="ChEBI" id="CHEBI:29108"/>
        <label>1</label>
    </ligand>
</feature>
<feature type="binding site" evidence="2">
    <location>
        <position position="164"/>
    </location>
    <ligand>
        <name>Ca(2+)</name>
        <dbReference type="ChEBI" id="CHEBI:29108"/>
        <label>3</label>
    </ligand>
</feature>
<feature type="binding site" evidence="2">
    <location>
        <position position="165"/>
    </location>
    <ligand>
        <name>Ca(2+)</name>
        <dbReference type="ChEBI" id="CHEBI:29108"/>
        <label>3</label>
    </ligand>
</feature>
<feature type="binding site" evidence="2">
    <location>
        <position position="168"/>
    </location>
    <ligand>
        <name>Ca(2+)</name>
        <dbReference type="ChEBI" id="CHEBI:29108"/>
        <label>3</label>
    </ligand>
</feature>
<feature type="binding site" evidence="2">
    <location>
        <position position="170"/>
    </location>
    <ligand>
        <name>Ca(2+)</name>
        <dbReference type="ChEBI" id="CHEBI:29108"/>
        <label>1</label>
    </ligand>
</feature>
<feature type="binding site" evidence="2">
    <location>
        <position position="170"/>
    </location>
    <ligand>
        <name>Ca(2+)</name>
        <dbReference type="ChEBI" id="CHEBI:29108"/>
        <label>3</label>
    </ligand>
</feature>
<feature type="binding site" evidence="2">
    <location>
        <begin position="200"/>
        <end position="205"/>
    </location>
    <ligand>
        <name>substrate</name>
    </ligand>
</feature>
<feature type="binding site" evidence="2">
    <location>
        <position position="206"/>
    </location>
    <ligand>
        <name>Ca(2+)</name>
        <dbReference type="ChEBI" id="CHEBI:29108"/>
        <label>1</label>
    </ligand>
</feature>
<feature type="binding site" evidence="2">
    <location>
        <position position="230"/>
    </location>
    <ligand>
        <name>substrate</name>
    </ligand>
</feature>
<feature type="binding site" evidence="3">
    <location>
        <position position="232"/>
    </location>
    <ligand>
        <name>substrate</name>
    </ligand>
</feature>
<feature type="binding site" evidence="2">
    <location>
        <position position="250"/>
    </location>
    <ligand>
        <name>substrate</name>
    </ligand>
</feature>
<feature type="binding site" evidence="2">
    <location>
        <position position="257"/>
    </location>
    <ligand>
        <name>substrate</name>
    </ligand>
</feature>
<feature type="binding site" evidence="2">
    <location>
        <position position="294"/>
    </location>
    <ligand>
        <name>substrate</name>
    </ligand>
</feature>
<feature type="binding site" evidence="2">
    <location>
        <begin position="300"/>
        <end position="302"/>
    </location>
    <ligand>
        <name>substrate</name>
    </ligand>
</feature>
<feature type="binding site" evidence="2">
    <location>
        <position position="313"/>
    </location>
    <ligand>
        <name>substrate</name>
    </ligand>
</feature>
<feature type="binding site" evidence="2">
    <location>
        <position position="319"/>
    </location>
    <ligand>
        <name>substrate</name>
    </ligand>
</feature>
<feature type="binding site" evidence="2">
    <location>
        <position position="398"/>
    </location>
    <ligand>
        <name>substrate</name>
    </ligand>
</feature>
<feature type="binding site" evidence="2">
    <location>
        <begin position="403"/>
        <end position="405"/>
    </location>
    <ligand>
        <name>substrate</name>
    </ligand>
</feature>
<feature type="binding site" evidence="2">
    <location>
        <begin position="415"/>
        <end position="421"/>
    </location>
    <ligand>
        <name>substrate</name>
    </ligand>
</feature>
<feature type="binding site" evidence="2">
    <location>
        <position position="425"/>
    </location>
    <ligand>
        <name>substrate</name>
    </ligand>
</feature>
<feature type="site" description="Transition state stabilizer" evidence="2">
    <location>
        <position position="314"/>
    </location>
</feature>
<feature type="sequence conflict" description="In Ref. 1; AAA33894." evidence="5" ref="1">
    <original>IAA</original>
    <variation>S</variation>
    <location>
        <begin position="428"/>
        <end position="430"/>
    </location>
</feature>
<sequence>MATGRRLSMILLLLLLGLASGDKILFQGFNWESWRQSGGWYNLLMGKVDDIVAAGVTHVWLPPPSHSVSTQGYMPGRLYDLDASRYGTSMELKSLISALHGKGIQAIADVVINHRCADYKDSRGIYCIFEGGTPDGRLDWGPHMICRDDTQFSDGTGNLDTGADFAAAPDIDHLNGVVQRELTDWLLWLKSDEVGFDAWRLDFARGYSPEVAKVYIEGTTPVGLAVAELWDSMAYGGDGKPEYNQDAHRQALVDWVDRVGGTASAGMVFDFTTKGIMNTAVEGELWRLIDQQGKAPGVIGWWPAKAVTFVDNHDTGSTQQMWPFPSDKVMQGYAYILTHPGNPCIFYDHFFDWGLKEQIAALVAVRQRNGVTATSSLKIMLHDADAYVAEIDGKVVMKIGSRYDVSSLIPPGFHLAAHGNGYAVWEKIAAAAAAADHRTSSSASL</sequence>